<keyword id="KW-0325">Glycoprotein</keyword>
<keyword id="KW-1185">Reference proteome</keyword>
<keyword id="KW-0964">Secreted</keyword>
<keyword id="KW-0732">Signal</keyword>
<evidence type="ECO:0000255" key="1"/>
<evidence type="ECO:0000305" key="2"/>
<reference key="1">
    <citation type="journal article" date="2000" name="Science">
        <title>The genome sequence of Drosophila melanogaster.</title>
        <authorList>
            <person name="Adams M.D."/>
            <person name="Celniker S.E."/>
            <person name="Holt R.A."/>
            <person name="Evans C.A."/>
            <person name="Gocayne J.D."/>
            <person name="Amanatides P.G."/>
            <person name="Scherer S.E."/>
            <person name="Li P.W."/>
            <person name="Hoskins R.A."/>
            <person name="Galle R.F."/>
            <person name="George R.A."/>
            <person name="Lewis S.E."/>
            <person name="Richards S."/>
            <person name="Ashburner M."/>
            <person name="Henderson S.N."/>
            <person name="Sutton G.G."/>
            <person name="Wortman J.R."/>
            <person name="Yandell M.D."/>
            <person name="Zhang Q."/>
            <person name="Chen L.X."/>
            <person name="Brandon R.C."/>
            <person name="Rogers Y.-H.C."/>
            <person name="Blazej R.G."/>
            <person name="Champe M."/>
            <person name="Pfeiffer B.D."/>
            <person name="Wan K.H."/>
            <person name="Doyle C."/>
            <person name="Baxter E.G."/>
            <person name="Helt G."/>
            <person name="Nelson C.R."/>
            <person name="Miklos G.L.G."/>
            <person name="Abril J.F."/>
            <person name="Agbayani A."/>
            <person name="An H.-J."/>
            <person name="Andrews-Pfannkoch C."/>
            <person name="Baldwin D."/>
            <person name="Ballew R.M."/>
            <person name="Basu A."/>
            <person name="Baxendale J."/>
            <person name="Bayraktaroglu L."/>
            <person name="Beasley E.M."/>
            <person name="Beeson K.Y."/>
            <person name="Benos P.V."/>
            <person name="Berman B.P."/>
            <person name="Bhandari D."/>
            <person name="Bolshakov S."/>
            <person name="Borkova D."/>
            <person name="Botchan M.R."/>
            <person name="Bouck J."/>
            <person name="Brokstein P."/>
            <person name="Brottier P."/>
            <person name="Burtis K.C."/>
            <person name="Busam D.A."/>
            <person name="Butler H."/>
            <person name="Cadieu E."/>
            <person name="Center A."/>
            <person name="Chandra I."/>
            <person name="Cherry J.M."/>
            <person name="Cawley S."/>
            <person name="Dahlke C."/>
            <person name="Davenport L.B."/>
            <person name="Davies P."/>
            <person name="de Pablos B."/>
            <person name="Delcher A."/>
            <person name="Deng Z."/>
            <person name="Mays A.D."/>
            <person name="Dew I."/>
            <person name="Dietz S.M."/>
            <person name="Dodson K."/>
            <person name="Doup L.E."/>
            <person name="Downes M."/>
            <person name="Dugan-Rocha S."/>
            <person name="Dunkov B.C."/>
            <person name="Dunn P."/>
            <person name="Durbin K.J."/>
            <person name="Evangelista C.C."/>
            <person name="Ferraz C."/>
            <person name="Ferriera S."/>
            <person name="Fleischmann W."/>
            <person name="Fosler C."/>
            <person name="Gabrielian A.E."/>
            <person name="Garg N.S."/>
            <person name="Gelbart W.M."/>
            <person name="Glasser K."/>
            <person name="Glodek A."/>
            <person name="Gong F."/>
            <person name="Gorrell J.H."/>
            <person name="Gu Z."/>
            <person name="Guan P."/>
            <person name="Harris M."/>
            <person name="Harris N.L."/>
            <person name="Harvey D.A."/>
            <person name="Heiman T.J."/>
            <person name="Hernandez J.R."/>
            <person name="Houck J."/>
            <person name="Hostin D."/>
            <person name="Houston K.A."/>
            <person name="Howland T.J."/>
            <person name="Wei M.-H."/>
            <person name="Ibegwam C."/>
            <person name="Jalali M."/>
            <person name="Kalush F."/>
            <person name="Karpen G.H."/>
            <person name="Ke Z."/>
            <person name="Kennison J.A."/>
            <person name="Ketchum K.A."/>
            <person name="Kimmel B.E."/>
            <person name="Kodira C.D."/>
            <person name="Kraft C.L."/>
            <person name="Kravitz S."/>
            <person name="Kulp D."/>
            <person name="Lai Z."/>
            <person name="Lasko P."/>
            <person name="Lei Y."/>
            <person name="Levitsky A.A."/>
            <person name="Li J.H."/>
            <person name="Li Z."/>
            <person name="Liang Y."/>
            <person name="Lin X."/>
            <person name="Liu X."/>
            <person name="Mattei B."/>
            <person name="McIntosh T.C."/>
            <person name="McLeod M.P."/>
            <person name="McPherson D."/>
            <person name="Merkulov G."/>
            <person name="Milshina N.V."/>
            <person name="Mobarry C."/>
            <person name="Morris J."/>
            <person name="Moshrefi A."/>
            <person name="Mount S.M."/>
            <person name="Moy M."/>
            <person name="Murphy B."/>
            <person name="Murphy L."/>
            <person name="Muzny D.M."/>
            <person name="Nelson D.L."/>
            <person name="Nelson D.R."/>
            <person name="Nelson K.A."/>
            <person name="Nixon K."/>
            <person name="Nusskern D.R."/>
            <person name="Pacleb J.M."/>
            <person name="Palazzolo M."/>
            <person name="Pittman G.S."/>
            <person name="Pan S."/>
            <person name="Pollard J."/>
            <person name="Puri V."/>
            <person name="Reese M.G."/>
            <person name="Reinert K."/>
            <person name="Remington K."/>
            <person name="Saunders R.D.C."/>
            <person name="Scheeler F."/>
            <person name="Shen H."/>
            <person name="Shue B.C."/>
            <person name="Siden-Kiamos I."/>
            <person name="Simpson M."/>
            <person name="Skupski M.P."/>
            <person name="Smith T.J."/>
            <person name="Spier E."/>
            <person name="Spradling A.C."/>
            <person name="Stapleton M."/>
            <person name="Strong R."/>
            <person name="Sun E."/>
            <person name="Svirskas R."/>
            <person name="Tector C."/>
            <person name="Turner R."/>
            <person name="Venter E."/>
            <person name="Wang A.H."/>
            <person name="Wang X."/>
            <person name="Wang Z.-Y."/>
            <person name="Wassarman D.A."/>
            <person name="Weinstock G.M."/>
            <person name="Weissenbach J."/>
            <person name="Williams S.M."/>
            <person name="Woodage T."/>
            <person name="Worley K.C."/>
            <person name="Wu D."/>
            <person name="Yang S."/>
            <person name="Yao Q.A."/>
            <person name="Ye J."/>
            <person name="Yeh R.-F."/>
            <person name="Zaveri J.S."/>
            <person name="Zhan M."/>
            <person name="Zhang G."/>
            <person name="Zhao Q."/>
            <person name="Zheng L."/>
            <person name="Zheng X.H."/>
            <person name="Zhong F.N."/>
            <person name="Zhong W."/>
            <person name="Zhou X."/>
            <person name="Zhu S.C."/>
            <person name="Zhu X."/>
            <person name="Smith H.O."/>
            <person name="Gibbs R.A."/>
            <person name="Myers E.W."/>
            <person name="Rubin G.M."/>
            <person name="Venter J.C."/>
        </authorList>
    </citation>
    <scope>NUCLEOTIDE SEQUENCE [LARGE SCALE GENOMIC DNA]</scope>
    <source>
        <strain>Berkeley</strain>
    </source>
</reference>
<reference key="2">
    <citation type="journal article" date="2002" name="Genome Biol.">
        <title>Annotation of the Drosophila melanogaster euchromatic genome: a systematic review.</title>
        <authorList>
            <person name="Misra S."/>
            <person name="Crosby M.A."/>
            <person name="Mungall C.J."/>
            <person name="Matthews B.B."/>
            <person name="Campbell K.S."/>
            <person name="Hradecky P."/>
            <person name="Huang Y."/>
            <person name="Kaminker J.S."/>
            <person name="Millburn G.H."/>
            <person name="Prochnik S.E."/>
            <person name="Smith C.D."/>
            <person name="Tupy J.L."/>
            <person name="Whitfield E.J."/>
            <person name="Bayraktaroglu L."/>
            <person name="Berman B.P."/>
            <person name="Bettencourt B.R."/>
            <person name="Celniker S.E."/>
            <person name="de Grey A.D.N.J."/>
            <person name="Drysdale R.A."/>
            <person name="Harris N.L."/>
            <person name="Richter J."/>
            <person name="Russo S."/>
            <person name="Schroeder A.J."/>
            <person name="Shu S.Q."/>
            <person name="Stapleton M."/>
            <person name="Yamada C."/>
            <person name="Ashburner M."/>
            <person name="Gelbart W.M."/>
            <person name="Rubin G.M."/>
            <person name="Lewis S.E."/>
        </authorList>
    </citation>
    <scope>GENOME REANNOTATION</scope>
    <source>
        <strain>Berkeley</strain>
    </source>
</reference>
<reference key="3">
    <citation type="journal article" date="2002" name="Genome Biol.">
        <title>A Drosophila full-length cDNA resource.</title>
        <authorList>
            <person name="Stapleton M."/>
            <person name="Carlson J.W."/>
            <person name="Brokstein P."/>
            <person name="Yu C."/>
            <person name="Champe M."/>
            <person name="George R.A."/>
            <person name="Guarin H."/>
            <person name="Kronmiller B."/>
            <person name="Pacleb J.M."/>
            <person name="Park S."/>
            <person name="Wan K.H."/>
            <person name="Rubin G.M."/>
            <person name="Celniker S.E."/>
        </authorList>
    </citation>
    <scope>NUCLEOTIDE SEQUENCE [LARGE SCALE MRNA]</scope>
    <source>
        <strain>Berkeley</strain>
        <tissue>Embryo</tissue>
    </source>
</reference>
<gene>
    <name type="ORF">CG4666</name>
</gene>
<name>THEM6_DROME</name>
<dbReference type="EMBL" id="AE014298">
    <property type="protein sequence ID" value="AAF46119.1"/>
    <property type="molecule type" value="Genomic_DNA"/>
</dbReference>
<dbReference type="EMBL" id="AY071547">
    <property type="protein sequence ID" value="AAL49169.1"/>
    <property type="molecule type" value="mRNA"/>
</dbReference>
<dbReference type="RefSeq" id="NP_001284923.1">
    <property type="nucleotide sequence ID" value="NM_001297994.1"/>
</dbReference>
<dbReference type="RefSeq" id="NP_572292.1">
    <property type="nucleotide sequence ID" value="NM_132064.4"/>
</dbReference>
<dbReference type="SMR" id="Q9W440"/>
<dbReference type="BioGRID" id="58037">
    <property type="interactions" value="5"/>
</dbReference>
<dbReference type="FunCoup" id="Q9W440">
    <property type="interactions" value="1"/>
</dbReference>
<dbReference type="IntAct" id="Q9W440">
    <property type="interactions" value="19"/>
</dbReference>
<dbReference type="GlyGen" id="Q9W440">
    <property type="glycosylation" value="1 site"/>
</dbReference>
<dbReference type="PaxDb" id="7227-FBpp0070852"/>
<dbReference type="DNASU" id="31541"/>
<dbReference type="EnsemblMetazoa" id="FBtr0070887">
    <property type="protein sequence ID" value="FBpp0070852"/>
    <property type="gene ID" value="FBgn0029838"/>
</dbReference>
<dbReference type="EnsemblMetazoa" id="FBtr0345900">
    <property type="protein sequence ID" value="FBpp0311824"/>
    <property type="gene ID" value="FBgn0029838"/>
</dbReference>
<dbReference type="GeneID" id="31541"/>
<dbReference type="KEGG" id="dme:Dmel_CG4666"/>
<dbReference type="UCSC" id="CG4666-RA">
    <property type="organism name" value="d. melanogaster"/>
</dbReference>
<dbReference type="AGR" id="FB:FBgn0029838"/>
<dbReference type="FlyBase" id="FBgn0029838">
    <property type="gene designation" value="CG4666"/>
</dbReference>
<dbReference type="VEuPathDB" id="VectorBase:FBgn0029838"/>
<dbReference type="eggNOG" id="KOG4366">
    <property type="taxonomic scope" value="Eukaryota"/>
</dbReference>
<dbReference type="HOGENOM" id="CLU_091107_0_0_1"/>
<dbReference type="InParanoid" id="Q9W440"/>
<dbReference type="OMA" id="VFIEAWF"/>
<dbReference type="OrthoDB" id="265761at2759"/>
<dbReference type="PhylomeDB" id="Q9W440"/>
<dbReference type="BioGRID-ORCS" id="31541">
    <property type="hits" value="0 hits in 1 CRISPR screen"/>
</dbReference>
<dbReference type="ChiTaRS" id="CG4666">
    <property type="organism name" value="fly"/>
</dbReference>
<dbReference type="GenomeRNAi" id="31541"/>
<dbReference type="PRO" id="PR:Q9W440"/>
<dbReference type="Proteomes" id="UP000000803">
    <property type="component" value="Chromosome X"/>
</dbReference>
<dbReference type="Bgee" id="FBgn0029838">
    <property type="expression patterns" value="Expressed in spermatid in male reproductive gland and 59 other cell types or tissues"/>
</dbReference>
<dbReference type="ExpressionAtlas" id="Q9W440">
    <property type="expression patterns" value="baseline and differential"/>
</dbReference>
<dbReference type="GO" id="GO:0005576">
    <property type="term" value="C:extracellular region"/>
    <property type="evidence" value="ECO:0007669"/>
    <property type="project" value="UniProtKB-SubCell"/>
</dbReference>
<dbReference type="CDD" id="cd00586">
    <property type="entry name" value="4HBT"/>
    <property type="match status" value="1"/>
</dbReference>
<dbReference type="Gene3D" id="3.10.129.10">
    <property type="entry name" value="Hotdog Thioesterase"/>
    <property type="match status" value="1"/>
</dbReference>
<dbReference type="InterPro" id="IPR029069">
    <property type="entry name" value="HotDog_dom_sf"/>
</dbReference>
<dbReference type="InterPro" id="IPR051490">
    <property type="entry name" value="THEM6_lcsJ_thioesterase"/>
</dbReference>
<dbReference type="PANTHER" id="PTHR12475">
    <property type="match status" value="1"/>
</dbReference>
<dbReference type="PANTHER" id="PTHR12475:SF4">
    <property type="entry name" value="PROTEIN THEM6"/>
    <property type="match status" value="1"/>
</dbReference>
<dbReference type="Pfam" id="PF13279">
    <property type="entry name" value="4HBT_2"/>
    <property type="match status" value="1"/>
</dbReference>
<dbReference type="SUPFAM" id="SSF54637">
    <property type="entry name" value="Thioesterase/thiol ester dehydrase-isomerase"/>
    <property type="match status" value="1"/>
</dbReference>
<protein>
    <recommendedName>
        <fullName>Protein THEM6</fullName>
    </recommendedName>
</protein>
<proteinExistence type="evidence at transcript level"/>
<feature type="signal peptide" evidence="1">
    <location>
        <begin position="1"/>
        <end position="18"/>
    </location>
</feature>
<feature type="chain" id="PRO_0000352885" description="Protein THEM6">
    <location>
        <begin position="19"/>
        <end position="193"/>
    </location>
</feature>
<feature type="glycosylation site" description="N-linked (GlcNAc...) asparagine" evidence="1">
    <location>
        <position position="149"/>
    </location>
</feature>
<organism>
    <name type="scientific">Drosophila melanogaster</name>
    <name type="common">Fruit fly</name>
    <dbReference type="NCBI Taxonomy" id="7227"/>
    <lineage>
        <taxon>Eukaryota</taxon>
        <taxon>Metazoa</taxon>
        <taxon>Ecdysozoa</taxon>
        <taxon>Arthropoda</taxon>
        <taxon>Hexapoda</taxon>
        <taxon>Insecta</taxon>
        <taxon>Pterygota</taxon>
        <taxon>Neoptera</taxon>
        <taxon>Endopterygota</taxon>
        <taxon>Diptera</taxon>
        <taxon>Brachycera</taxon>
        <taxon>Muscomorpha</taxon>
        <taxon>Ephydroidea</taxon>
        <taxon>Drosophilidae</taxon>
        <taxon>Drosophila</taxon>
        <taxon>Sophophora</taxon>
    </lineage>
</organism>
<sequence length="193" mass="22956">MSWLVVLLILYVIWDVNYFIRCVFTVFAGRLFQRKRKVTDTTTIYGLCTSQDVDIFIRHMNNARYLRELDFARFHFYALTGLYERIRDRRGGAVQGASSVRYRRTIPIFHPYKIQTKLIWWDDKAIYLEQQFITLSDGFVRAVAMSKQNITNCNVLEVLKTYPETAQRPEKPEELKLWLDAIELSSQKLRKDK</sequence>
<accession>Q9W440</accession>
<comment type="subcellular location">
    <subcellularLocation>
        <location evidence="2">Secreted</location>
    </subcellularLocation>
</comment>
<comment type="similarity">
    <text evidence="2">Belongs to the THEM6 family.</text>
</comment>